<sequence>MARSTARKRALNTLYEADEKSQDILSLLDERIAHPGAQTPLPDYAIEIVKGVAEHRRQIDMTLDEHSTGWKVRRMGVVDRNILRIAAWEILFTDDVPDKVAIDEALALAKTLCDDDSPAFIHGLLSAVCTAKNAAPAPESVAEEADEESSDSAAAASEPTDEGDVSDSPDSSGASDEPAAPSAEIQPTVD</sequence>
<evidence type="ECO:0000255" key="1">
    <source>
        <dbReference type="HAMAP-Rule" id="MF_00073"/>
    </source>
</evidence>
<evidence type="ECO:0000256" key="2">
    <source>
        <dbReference type="SAM" id="MobiDB-lite"/>
    </source>
</evidence>
<accession>B3DQ30</accession>
<feature type="chain" id="PRO_1000092527" description="Transcription antitermination protein NusB">
    <location>
        <begin position="1"/>
        <end position="190"/>
    </location>
</feature>
<feature type="region of interest" description="Disordered" evidence="2">
    <location>
        <begin position="135"/>
        <end position="190"/>
    </location>
</feature>
<feature type="compositionally biased region" description="Acidic residues" evidence="2">
    <location>
        <begin position="141"/>
        <end position="150"/>
    </location>
</feature>
<name>NUSB_BIFLD</name>
<proteinExistence type="inferred from homology"/>
<keyword id="KW-0694">RNA-binding</keyword>
<keyword id="KW-0804">Transcription</keyword>
<keyword id="KW-0889">Transcription antitermination</keyword>
<keyword id="KW-0805">Transcription regulation</keyword>
<comment type="function">
    <text evidence="1">Involved in transcription antitermination. Required for transcription of ribosomal RNA (rRNA) genes. Binds specifically to the boxA antiterminator sequence of the ribosomal RNA (rrn) operons.</text>
</comment>
<comment type="similarity">
    <text evidence="1">Belongs to the NusB family.</text>
</comment>
<dbReference type="EMBL" id="CP000605">
    <property type="protein sequence ID" value="ACD97529.1"/>
    <property type="molecule type" value="Genomic_DNA"/>
</dbReference>
<dbReference type="RefSeq" id="WP_007053263.1">
    <property type="nucleotide sequence ID" value="NZ_AABM02000010.1"/>
</dbReference>
<dbReference type="SMR" id="B3DQ30"/>
<dbReference type="GeneID" id="69578601"/>
<dbReference type="KEGG" id="blj:BLD_0083"/>
<dbReference type="HOGENOM" id="CLU_087843_2_1_11"/>
<dbReference type="Proteomes" id="UP000002419">
    <property type="component" value="Chromosome"/>
</dbReference>
<dbReference type="GO" id="GO:0005829">
    <property type="term" value="C:cytosol"/>
    <property type="evidence" value="ECO:0007669"/>
    <property type="project" value="TreeGrafter"/>
</dbReference>
<dbReference type="GO" id="GO:0003723">
    <property type="term" value="F:RNA binding"/>
    <property type="evidence" value="ECO:0007669"/>
    <property type="project" value="UniProtKB-UniRule"/>
</dbReference>
<dbReference type="GO" id="GO:0006353">
    <property type="term" value="P:DNA-templated transcription termination"/>
    <property type="evidence" value="ECO:0007669"/>
    <property type="project" value="UniProtKB-UniRule"/>
</dbReference>
<dbReference type="GO" id="GO:0031564">
    <property type="term" value="P:transcription antitermination"/>
    <property type="evidence" value="ECO:0007669"/>
    <property type="project" value="UniProtKB-KW"/>
</dbReference>
<dbReference type="Gene3D" id="1.10.940.10">
    <property type="entry name" value="NusB-like"/>
    <property type="match status" value="1"/>
</dbReference>
<dbReference type="HAMAP" id="MF_00073">
    <property type="entry name" value="NusB"/>
    <property type="match status" value="1"/>
</dbReference>
<dbReference type="InterPro" id="IPR035926">
    <property type="entry name" value="NusB-like_sf"/>
</dbReference>
<dbReference type="InterPro" id="IPR011605">
    <property type="entry name" value="NusB_fam"/>
</dbReference>
<dbReference type="InterPro" id="IPR006027">
    <property type="entry name" value="NusB_RsmB_TIM44"/>
</dbReference>
<dbReference type="NCBIfam" id="TIGR01951">
    <property type="entry name" value="nusB"/>
    <property type="match status" value="1"/>
</dbReference>
<dbReference type="PANTHER" id="PTHR11078:SF3">
    <property type="entry name" value="ANTITERMINATION NUSB DOMAIN-CONTAINING PROTEIN"/>
    <property type="match status" value="1"/>
</dbReference>
<dbReference type="PANTHER" id="PTHR11078">
    <property type="entry name" value="N UTILIZATION SUBSTANCE PROTEIN B-RELATED"/>
    <property type="match status" value="1"/>
</dbReference>
<dbReference type="Pfam" id="PF01029">
    <property type="entry name" value="NusB"/>
    <property type="match status" value="1"/>
</dbReference>
<dbReference type="SUPFAM" id="SSF48013">
    <property type="entry name" value="NusB-like"/>
    <property type="match status" value="1"/>
</dbReference>
<reference key="1">
    <citation type="journal article" date="2008" name="BMC Genomics">
        <title>Comparative genomic analysis of the gut bacterium Bifidobacterium longum reveals loci susceptible to deletion during pure culture growth.</title>
        <authorList>
            <person name="Lee J.H."/>
            <person name="Karamychev V.N."/>
            <person name="Kozyavkin S.A."/>
            <person name="Mills D."/>
            <person name="Pavlov A.R."/>
            <person name="Pavlova N.V."/>
            <person name="Polouchine N.N."/>
            <person name="Richardson P.M."/>
            <person name="Shakhova V.V."/>
            <person name="Slesarev A.I."/>
            <person name="Weimer B."/>
            <person name="O'Sullivan D.J."/>
        </authorList>
    </citation>
    <scope>NUCLEOTIDE SEQUENCE [LARGE SCALE GENOMIC DNA]</scope>
    <source>
        <strain>DJO10A</strain>
    </source>
</reference>
<protein>
    <recommendedName>
        <fullName evidence="1">Transcription antitermination protein NusB</fullName>
    </recommendedName>
    <alternativeName>
        <fullName evidence="1">Antitermination factor NusB</fullName>
    </alternativeName>
</protein>
<gene>
    <name evidence="1" type="primary">nusB</name>
    <name type="ordered locus">BLD_0083</name>
</gene>
<organism>
    <name type="scientific">Bifidobacterium longum (strain DJO10A)</name>
    <dbReference type="NCBI Taxonomy" id="205913"/>
    <lineage>
        <taxon>Bacteria</taxon>
        <taxon>Bacillati</taxon>
        <taxon>Actinomycetota</taxon>
        <taxon>Actinomycetes</taxon>
        <taxon>Bifidobacteriales</taxon>
        <taxon>Bifidobacteriaceae</taxon>
        <taxon>Bifidobacterium</taxon>
    </lineage>
</organism>